<name>IRAP_ECOK1</name>
<protein>
    <recommendedName>
        <fullName evidence="1">Anti-adapter protein IraP</fullName>
    </recommendedName>
</protein>
<dbReference type="EMBL" id="CP000468">
    <property type="protein sequence ID" value="ABI99843.1"/>
    <property type="molecule type" value="Genomic_DNA"/>
</dbReference>
<dbReference type="RefSeq" id="WP_000792973.1">
    <property type="nucleotide sequence ID" value="NZ_CADILS010000009.1"/>
</dbReference>
<dbReference type="SMR" id="A1A854"/>
<dbReference type="KEGG" id="ecv:APECO1_1626"/>
<dbReference type="HOGENOM" id="CLU_169517_0_0_6"/>
<dbReference type="Proteomes" id="UP000008216">
    <property type="component" value="Chromosome"/>
</dbReference>
<dbReference type="GO" id="GO:0005737">
    <property type="term" value="C:cytoplasm"/>
    <property type="evidence" value="ECO:0007669"/>
    <property type="project" value="UniProtKB-SubCell"/>
</dbReference>
<dbReference type="GO" id="GO:0009267">
    <property type="term" value="P:cellular response to starvation"/>
    <property type="evidence" value="ECO:0007669"/>
    <property type="project" value="UniProtKB-UniRule"/>
</dbReference>
<dbReference type="HAMAP" id="MF_01198">
    <property type="entry name" value="Anti_adapt_IraP"/>
    <property type="match status" value="1"/>
</dbReference>
<dbReference type="InterPro" id="IPR019732">
    <property type="entry name" value="SigmaS_Anti-adapt_IraP"/>
</dbReference>
<dbReference type="NCBIfam" id="NF007598">
    <property type="entry name" value="PRK10244.1"/>
    <property type="match status" value="1"/>
</dbReference>
<dbReference type="Pfam" id="PF10796">
    <property type="entry name" value="Anti-adapt_IraP"/>
    <property type="match status" value="1"/>
</dbReference>
<gene>
    <name evidence="1" type="primary">iraP</name>
    <name type="ordered locus">Ecok1_03500</name>
    <name type="ORF">APECO1_1626</name>
</gene>
<sequence>MKNLIAELLFKLAQKEEESKELCAQVEALEIIVTAMLRNMAQNDQQRLIDQVEGALYEVKPDASIPDDDTELLRDYVKKLLRHPRQ</sequence>
<feature type="chain" id="PRO_0000337853" description="Anti-adapter protein IraP">
    <location>
        <begin position="1"/>
        <end position="86"/>
    </location>
</feature>
<feature type="coiled-coil region" evidence="1">
    <location>
        <begin position="1"/>
        <end position="36"/>
    </location>
</feature>
<reference key="1">
    <citation type="journal article" date="2007" name="J. Bacteriol.">
        <title>The genome sequence of avian pathogenic Escherichia coli strain O1:K1:H7 shares strong similarities with human extraintestinal pathogenic E. coli genomes.</title>
        <authorList>
            <person name="Johnson T.J."/>
            <person name="Kariyawasam S."/>
            <person name="Wannemuehler Y."/>
            <person name="Mangiamele P."/>
            <person name="Johnson S.J."/>
            <person name="Doetkott C."/>
            <person name="Skyberg J.A."/>
            <person name="Lynne A.M."/>
            <person name="Johnson J.R."/>
            <person name="Nolan L.K."/>
        </authorList>
    </citation>
    <scope>NUCLEOTIDE SEQUENCE [LARGE SCALE GENOMIC DNA]</scope>
</reference>
<organism>
    <name type="scientific">Escherichia coli O1:K1 / APEC</name>
    <dbReference type="NCBI Taxonomy" id="405955"/>
    <lineage>
        <taxon>Bacteria</taxon>
        <taxon>Pseudomonadati</taxon>
        <taxon>Pseudomonadota</taxon>
        <taxon>Gammaproteobacteria</taxon>
        <taxon>Enterobacterales</taxon>
        <taxon>Enterobacteriaceae</taxon>
        <taxon>Escherichia</taxon>
    </lineage>
</organism>
<keyword id="KW-0175">Coiled coil</keyword>
<keyword id="KW-0963">Cytoplasm</keyword>
<keyword id="KW-1185">Reference proteome</keyword>
<keyword id="KW-0346">Stress response</keyword>
<accession>A1A854</accession>
<proteinExistence type="inferred from homology"/>
<evidence type="ECO:0000255" key="1">
    <source>
        <dbReference type="HAMAP-Rule" id="MF_01198"/>
    </source>
</evidence>
<comment type="function">
    <text evidence="1">Inhibits RpoS proteolysis by regulating RssB activity, thereby increasing the stability of the sigma stress factor RpoS especially during phosphate starvation, but also in stationary phase and during nitrogen starvation. Its effect on RpoS stability is due to its interaction with RssB, which probably blocks the interaction of RssB with RpoS, and the consequent delivery of the RssB-RpoS complex to the ClpXP protein degradation pathway.</text>
</comment>
<comment type="subunit">
    <text evidence="1">Interacts with RssB.</text>
</comment>
<comment type="subcellular location">
    <subcellularLocation>
        <location evidence="1">Cytoplasm</location>
    </subcellularLocation>
</comment>
<comment type="similarity">
    <text evidence="1">Belongs to the IraP family.</text>
</comment>